<dbReference type="EC" id="6.1.1.19" evidence="1"/>
<dbReference type="EMBL" id="CP000890">
    <property type="protein sequence ID" value="ABX78394.1"/>
    <property type="molecule type" value="Genomic_DNA"/>
</dbReference>
<dbReference type="SMR" id="A9N9G2"/>
<dbReference type="KEGG" id="cbs:COXBURSA331_A0077"/>
<dbReference type="HOGENOM" id="CLU_006406_0_1_6"/>
<dbReference type="GO" id="GO:0005737">
    <property type="term" value="C:cytoplasm"/>
    <property type="evidence" value="ECO:0007669"/>
    <property type="project" value="UniProtKB-SubCell"/>
</dbReference>
<dbReference type="GO" id="GO:0004814">
    <property type="term" value="F:arginine-tRNA ligase activity"/>
    <property type="evidence" value="ECO:0007669"/>
    <property type="project" value="UniProtKB-UniRule"/>
</dbReference>
<dbReference type="GO" id="GO:0005524">
    <property type="term" value="F:ATP binding"/>
    <property type="evidence" value="ECO:0007669"/>
    <property type="project" value="UniProtKB-UniRule"/>
</dbReference>
<dbReference type="GO" id="GO:0006420">
    <property type="term" value="P:arginyl-tRNA aminoacylation"/>
    <property type="evidence" value="ECO:0007669"/>
    <property type="project" value="UniProtKB-UniRule"/>
</dbReference>
<dbReference type="CDD" id="cd07956">
    <property type="entry name" value="Anticodon_Ia_Arg"/>
    <property type="match status" value="1"/>
</dbReference>
<dbReference type="CDD" id="cd00671">
    <property type="entry name" value="ArgRS_core"/>
    <property type="match status" value="1"/>
</dbReference>
<dbReference type="FunFam" id="1.10.730.10:FF:000008">
    <property type="entry name" value="Arginine--tRNA ligase"/>
    <property type="match status" value="1"/>
</dbReference>
<dbReference type="FunFam" id="3.30.1360.70:FF:000003">
    <property type="entry name" value="Arginine--tRNA ligase"/>
    <property type="match status" value="1"/>
</dbReference>
<dbReference type="Gene3D" id="3.30.1360.70">
    <property type="entry name" value="Arginyl tRNA synthetase N-terminal domain"/>
    <property type="match status" value="1"/>
</dbReference>
<dbReference type="Gene3D" id="3.40.50.620">
    <property type="entry name" value="HUPs"/>
    <property type="match status" value="1"/>
</dbReference>
<dbReference type="Gene3D" id="1.10.730.10">
    <property type="entry name" value="Isoleucyl-tRNA Synthetase, Domain 1"/>
    <property type="match status" value="1"/>
</dbReference>
<dbReference type="HAMAP" id="MF_00123">
    <property type="entry name" value="Arg_tRNA_synth"/>
    <property type="match status" value="1"/>
</dbReference>
<dbReference type="InterPro" id="IPR001412">
    <property type="entry name" value="aa-tRNA-synth_I_CS"/>
</dbReference>
<dbReference type="InterPro" id="IPR001278">
    <property type="entry name" value="Arg-tRNA-ligase"/>
</dbReference>
<dbReference type="InterPro" id="IPR005148">
    <property type="entry name" value="Arg-tRNA-synth_N"/>
</dbReference>
<dbReference type="InterPro" id="IPR036695">
    <property type="entry name" value="Arg-tRNA-synth_N_sf"/>
</dbReference>
<dbReference type="InterPro" id="IPR035684">
    <property type="entry name" value="ArgRS_core"/>
</dbReference>
<dbReference type="InterPro" id="IPR008909">
    <property type="entry name" value="DALR_anticod-bd"/>
</dbReference>
<dbReference type="InterPro" id="IPR014729">
    <property type="entry name" value="Rossmann-like_a/b/a_fold"/>
</dbReference>
<dbReference type="InterPro" id="IPR009080">
    <property type="entry name" value="tRNAsynth_Ia_anticodon-bd"/>
</dbReference>
<dbReference type="NCBIfam" id="TIGR00456">
    <property type="entry name" value="argS"/>
    <property type="match status" value="1"/>
</dbReference>
<dbReference type="PANTHER" id="PTHR11956:SF5">
    <property type="entry name" value="ARGININE--TRNA LIGASE, CYTOPLASMIC"/>
    <property type="match status" value="1"/>
</dbReference>
<dbReference type="PANTHER" id="PTHR11956">
    <property type="entry name" value="ARGINYL-TRNA SYNTHETASE"/>
    <property type="match status" value="1"/>
</dbReference>
<dbReference type="Pfam" id="PF03485">
    <property type="entry name" value="Arg_tRNA_synt_N"/>
    <property type="match status" value="1"/>
</dbReference>
<dbReference type="Pfam" id="PF05746">
    <property type="entry name" value="DALR_1"/>
    <property type="match status" value="1"/>
</dbReference>
<dbReference type="Pfam" id="PF00750">
    <property type="entry name" value="tRNA-synt_1d"/>
    <property type="match status" value="1"/>
</dbReference>
<dbReference type="PRINTS" id="PR01038">
    <property type="entry name" value="TRNASYNTHARG"/>
</dbReference>
<dbReference type="SMART" id="SM01016">
    <property type="entry name" value="Arg_tRNA_synt_N"/>
    <property type="match status" value="1"/>
</dbReference>
<dbReference type="SMART" id="SM00836">
    <property type="entry name" value="DALR_1"/>
    <property type="match status" value="1"/>
</dbReference>
<dbReference type="SUPFAM" id="SSF47323">
    <property type="entry name" value="Anticodon-binding domain of a subclass of class I aminoacyl-tRNA synthetases"/>
    <property type="match status" value="1"/>
</dbReference>
<dbReference type="SUPFAM" id="SSF55190">
    <property type="entry name" value="Arginyl-tRNA synthetase (ArgRS), N-terminal 'additional' domain"/>
    <property type="match status" value="1"/>
</dbReference>
<dbReference type="SUPFAM" id="SSF52374">
    <property type="entry name" value="Nucleotidylyl transferase"/>
    <property type="match status" value="1"/>
</dbReference>
<dbReference type="PROSITE" id="PS00178">
    <property type="entry name" value="AA_TRNA_LIGASE_I"/>
    <property type="match status" value="1"/>
</dbReference>
<proteinExistence type="inferred from homology"/>
<accession>A9N9G2</accession>
<keyword id="KW-0030">Aminoacyl-tRNA synthetase</keyword>
<keyword id="KW-0067">ATP-binding</keyword>
<keyword id="KW-0963">Cytoplasm</keyword>
<keyword id="KW-0436">Ligase</keyword>
<keyword id="KW-0547">Nucleotide-binding</keyword>
<keyword id="KW-0648">Protein biosynthesis</keyword>
<reference key="1">
    <citation type="submission" date="2007-11" db="EMBL/GenBank/DDBJ databases">
        <title>Genome sequencing of phylogenetically and phenotypically diverse Coxiella burnetii isolates.</title>
        <authorList>
            <person name="Seshadri R."/>
            <person name="Samuel J.E."/>
        </authorList>
    </citation>
    <scope>NUCLEOTIDE SEQUENCE [LARGE SCALE GENOMIC DNA]</scope>
    <source>
        <strain>RSA 331 / Henzerling II</strain>
    </source>
</reference>
<comment type="catalytic activity">
    <reaction evidence="1">
        <text>tRNA(Arg) + L-arginine + ATP = L-arginyl-tRNA(Arg) + AMP + diphosphate</text>
        <dbReference type="Rhea" id="RHEA:20301"/>
        <dbReference type="Rhea" id="RHEA-COMP:9658"/>
        <dbReference type="Rhea" id="RHEA-COMP:9673"/>
        <dbReference type="ChEBI" id="CHEBI:30616"/>
        <dbReference type="ChEBI" id="CHEBI:32682"/>
        <dbReference type="ChEBI" id="CHEBI:33019"/>
        <dbReference type="ChEBI" id="CHEBI:78442"/>
        <dbReference type="ChEBI" id="CHEBI:78513"/>
        <dbReference type="ChEBI" id="CHEBI:456215"/>
        <dbReference type="EC" id="6.1.1.19"/>
    </reaction>
</comment>
<comment type="subunit">
    <text evidence="1">Monomer.</text>
</comment>
<comment type="subcellular location">
    <subcellularLocation>
        <location evidence="1">Cytoplasm</location>
    </subcellularLocation>
</comment>
<comment type="similarity">
    <text evidence="1">Belongs to the class-I aminoacyl-tRNA synthetase family.</text>
</comment>
<name>SYR_COXBR</name>
<organism>
    <name type="scientific">Coxiella burnetii (strain RSA 331 / Henzerling II)</name>
    <dbReference type="NCBI Taxonomy" id="360115"/>
    <lineage>
        <taxon>Bacteria</taxon>
        <taxon>Pseudomonadati</taxon>
        <taxon>Pseudomonadota</taxon>
        <taxon>Gammaproteobacteria</taxon>
        <taxon>Legionellales</taxon>
        <taxon>Coxiellaceae</taxon>
        <taxon>Coxiella</taxon>
    </lineage>
</organism>
<evidence type="ECO:0000255" key="1">
    <source>
        <dbReference type="HAMAP-Rule" id="MF_00123"/>
    </source>
</evidence>
<feature type="chain" id="PRO_1000076211" description="Arginine--tRNA ligase">
    <location>
        <begin position="1"/>
        <end position="586"/>
    </location>
</feature>
<feature type="short sequence motif" description="'HIGH' region">
    <location>
        <begin position="128"/>
        <end position="138"/>
    </location>
</feature>
<protein>
    <recommendedName>
        <fullName evidence="1">Arginine--tRNA ligase</fullName>
        <ecNumber evidence="1">6.1.1.19</ecNumber>
    </recommendedName>
    <alternativeName>
        <fullName evidence="1">Arginyl-tRNA synthetase</fullName>
        <shortName evidence="1">ArgRS</shortName>
    </alternativeName>
</protein>
<sequence length="586" mass="66076">MKQQIETLLNQAIERLKTKGVLKPEVTPVIKITHTTDPQHGDFATNLALTLSKAAGMSPHALAEKIVEALPPSGQITEVEIAGPGFINFFVTEGSYQTVVSSILKAGKDYGRSEMGKGQRVHMEYVSANPTGPLHVGHGRGAAYGACVANLLNAAGFEVHREYYVNDAGRQMGILALSVWVRYLQGYEASIELPKNAYQGEYIIDIAEALKAKYGKQFYHSVESIQAKIPEEIDSNADPEAYLDAWVTAQKDLLGPKDFECVFQAALDSILNDIKNDLEEFGVTYDDWFPESRLVREGLIQEGLDLLTKHGYVYEKNGAQWFRATALGDEKDRVLIRKNGLPTYFAADVAYHLHKFNQGYDQIIDIFGADHHGYIPRIRGFLKGLGKAPEKLHILLVQFAILYRGNEKVSMSTRGGTFVTLRELRHEVGNDAARFFYIMRKPDQHLDFDLELAKSQSNENPVYYIQYAHARICSVFRQLKTTQKNWDRPRGMENLSLLSTNYEKELLATLGRYPEVIKRAAMNYAPHLLAHYLQTLANQFHTYYNAERFLIEDDNLRNARLNLINAVQQIIRNGLTLLGVSAPEEM</sequence>
<gene>
    <name evidence="1" type="primary">argS</name>
    <name type="ordered locus">COXBURSA331_A0077</name>
</gene>